<evidence type="ECO:0000255" key="1">
    <source>
        <dbReference type="HAMAP-Rule" id="MF_00154"/>
    </source>
</evidence>
<accession>Q114N4</accession>
<organism>
    <name type="scientific">Trichodesmium erythraeum (strain IMS101)</name>
    <dbReference type="NCBI Taxonomy" id="203124"/>
    <lineage>
        <taxon>Bacteria</taxon>
        <taxon>Bacillati</taxon>
        <taxon>Cyanobacteriota</taxon>
        <taxon>Cyanophyceae</taxon>
        <taxon>Oscillatoriophycideae</taxon>
        <taxon>Oscillatoriales</taxon>
        <taxon>Microcoleaceae</taxon>
        <taxon>Trichodesmium</taxon>
    </lineage>
</organism>
<protein>
    <recommendedName>
        <fullName evidence="1">Protoheme IX farnesyltransferase</fullName>
        <ecNumber evidence="1">2.5.1.141</ecNumber>
    </recommendedName>
    <alternativeName>
        <fullName evidence="1">Heme B farnesyltransferase</fullName>
    </alternativeName>
    <alternativeName>
        <fullName evidence="1">Heme O synthase</fullName>
    </alternativeName>
</protein>
<feature type="chain" id="PRO_0000327185" description="Protoheme IX farnesyltransferase">
    <location>
        <begin position="1"/>
        <end position="328"/>
    </location>
</feature>
<feature type="transmembrane region" description="Helical" evidence="1">
    <location>
        <begin position="31"/>
        <end position="51"/>
    </location>
</feature>
<feature type="transmembrane region" description="Helical" evidence="1">
    <location>
        <begin position="53"/>
        <end position="73"/>
    </location>
</feature>
<feature type="transmembrane region" description="Helical" evidence="1">
    <location>
        <begin position="120"/>
        <end position="140"/>
    </location>
</feature>
<feature type="transmembrane region" description="Helical" evidence="1">
    <location>
        <begin position="153"/>
        <end position="173"/>
    </location>
</feature>
<feature type="transmembrane region" description="Helical" evidence="1">
    <location>
        <begin position="181"/>
        <end position="201"/>
    </location>
</feature>
<feature type="transmembrane region" description="Helical" evidence="1">
    <location>
        <begin position="226"/>
        <end position="246"/>
    </location>
</feature>
<feature type="transmembrane region" description="Helical" evidence="1">
    <location>
        <begin position="250"/>
        <end position="270"/>
    </location>
</feature>
<feature type="transmembrane region" description="Helical" evidence="1">
    <location>
        <begin position="285"/>
        <end position="305"/>
    </location>
</feature>
<gene>
    <name evidence="1" type="primary">ctaB</name>
    <name type="ordered locus">Tery_1781</name>
</gene>
<keyword id="KW-0997">Cell inner membrane</keyword>
<keyword id="KW-1003">Cell membrane</keyword>
<keyword id="KW-0350">Heme biosynthesis</keyword>
<keyword id="KW-0472">Membrane</keyword>
<keyword id="KW-0808">Transferase</keyword>
<keyword id="KW-0812">Transmembrane</keyword>
<keyword id="KW-1133">Transmembrane helix</keyword>
<dbReference type="EC" id="2.5.1.141" evidence="1"/>
<dbReference type="EMBL" id="CP000393">
    <property type="protein sequence ID" value="ABG51040.1"/>
    <property type="molecule type" value="Genomic_DNA"/>
</dbReference>
<dbReference type="RefSeq" id="WP_011611415.1">
    <property type="nucleotide sequence ID" value="NC_008312.1"/>
</dbReference>
<dbReference type="SMR" id="Q114N4"/>
<dbReference type="STRING" id="203124.Tery_1781"/>
<dbReference type="KEGG" id="ter:Tery_1781"/>
<dbReference type="eggNOG" id="COG0109">
    <property type="taxonomic scope" value="Bacteria"/>
</dbReference>
<dbReference type="HOGENOM" id="CLU_029631_0_2_3"/>
<dbReference type="OrthoDB" id="9814417at2"/>
<dbReference type="UniPathway" id="UPA00834">
    <property type="reaction ID" value="UER00712"/>
</dbReference>
<dbReference type="GO" id="GO:0005886">
    <property type="term" value="C:plasma membrane"/>
    <property type="evidence" value="ECO:0007669"/>
    <property type="project" value="UniProtKB-SubCell"/>
</dbReference>
<dbReference type="GO" id="GO:0008495">
    <property type="term" value="F:protoheme IX farnesyltransferase activity"/>
    <property type="evidence" value="ECO:0007669"/>
    <property type="project" value="UniProtKB-UniRule"/>
</dbReference>
<dbReference type="GO" id="GO:0048034">
    <property type="term" value="P:heme O biosynthetic process"/>
    <property type="evidence" value="ECO:0007669"/>
    <property type="project" value="UniProtKB-UniRule"/>
</dbReference>
<dbReference type="CDD" id="cd13957">
    <property type="entry name" value="PT_UbiA_Cox10"/>
    <property type="match status" value="1"/>
</dbReference>
<dbReference type="FunFam" id="1.10.357.140:FF:000001">
    <property type="entry name" value="Protoheme IX farnesyltransferase"/>
    <property type="match status" value="1"/>
</dbReference>
<dbReference type="Gene3D" id="1.10.357.140">
    <property type="entry name" value="UbiA prenyltransferase"/>
    <property type="match status" value="1"/>
</dbReference>
<dbReference type="HAMAP" id="MF_00154">
    <property type="entry name" value="CyoE_CtaB"/>
    <property type="match status" value="1"/>
</dbReference>
<dbReference type="InterPro" id="IPR006369">
    <property type="entry name" value="Protohaem_IX_farnesylTrfase"/>
</dbReference>
<dbReference type="InterPro" id="IPR000537">
    <property type="entry name" value="UbiA_prenyltransferase"/>
</dbReference>
<dbReference type="InterPro" id="IPR030470">
    <property type="entry name" value="UbiA_prenylTrfase_CS"/>
</dbReference>
<dbReference type="InterPro" id="IPR044878">
    <property type="entry name" value="UbiA_sf"/>
</dbReference>
<dbReference type="NCBIfam" id="TIGR01473">
    <property type="entry name" value="cyoE_ctaB"/>
    <property type="match status" value="1"/>
</dbReference>
<dbReference type="NCBIfam" id="NF003349">
    <property type="entry name" value="PRK04375.1-2"/>
    <property type="match status" value="1"/>
</dbReference>
<dbReference type="PANTHER" id="PTHR43448:SF7">
    <property type="entry name" value="4-HYDROXYBENZOATE SOLANESYLTRANSFERASE"/>
    <property type="match status" value="1"/>
</dbReference>
<dbReference type="PANTHER" id="PTHR43448">
    <property type="entry name" value="PROTOHEME IX FARNESYLTRANSFERASE, MITOCHONDRIAL"/>
    <property type="match status" value="1"/>
</dbReference>
<dbReference type="Pfam" id="PF01040">
    <property type="entry name" value="UbiA"/>
    <property type="match status" value="1"/>
</dbReference>
<dbReference type="PROSITE" id="PS00943">
    <property type="entry name" value="UBIA"/>
    <property type="match status" value="1"/>
</dbReference>
<reference key="1">
    <citation type="journal article" date="2015" name="Proc. Natl. Acad. Sci. U.S.A.">
        <title>Trichodesmium genome maintains abundant, widespread noncoding DNA in situ, despite oligotrophic lifestyle.</title>
        <authorList>
            <person name="Walworth N."/>
            <person name="Pfreundt U."/>
            <person name="Nelson W.C."/>
            <person name="Mincer T."/>
            <person name="Heidelberg J.F."/>
            <person name="Fu F."/>
            <person name="Waterbury J.B."/>
            <person name="Glavina del Rio T."/>
            <person name="Goodwin L."/>
            <person name="Kyrpides N.C."/>
            <person name="Land M.L."/>
            <person name="Woyke T."/>
            <person name="Hutchins D.A."/>
            <person name="Hess W.R."/>
            <person name="Webb E.A."/>
        </authorList>
    </citation>
    <scope>NUCLEOTIDE SEQUENCE [LARGE SCALE GENOMIC DNA]</scope>
    <source>
        <strain>IMS101</strain>
    </source>
</reference>
<name>COXX_TRIEI</name>
<comment type="function">
    <text evidence="1">Converts heme B (protoheme IX) to heme O by substitution of the vinyl group on carbon 2 of heme B porphyrin ring with a hydroxyethyl farnesyl side group.</text>
</comment>
<comment type="catalytic activity">
    <reaction evidence="1">
        <text>heme b + (2E,6E)-farnesyl diphosphate + H2O = Fe(II)-heme o + diphosphate</text>
        <dbReference type="Rhea" id="RHEA:28070"/>
        <dbReference type="ChEBI" id="CHEBI:15377"/>
        <dbReference type="ChEBI" id="CHEBI:33019"/>
        <dbReference type="ChEBI" id="CHEBI:60344"/>
        <dbReference type="ChEBI" id="CHEBI:60530"/>
        <dbReference type="ChEBI" id="CHEBI:175763"/>
        <dbReference type="EC" id="2.5.1.141"/>
    </reaction>
</comment>
<comment type="pathway">
    <text evidence="1">Porphyrin-containing compound metabolism; heme O biosynthesis; heme O from protoheme: step 1/1.</text>
</comment>
<comment type="subcellular location">
    <subcellularLocation>
        <location evidence="1">Cell inner membrane</location>
        <topology evidence="1">Multi-pass membrane protein</topology>
    </subcellularLocation>
</comment>
<comment type="miscellaneous">
    <text evidence="1">Carbon 2 of the heme B porphyrin ring is defined according to the Fischer nomenclature.</text>
</comment>
<comment type="similarity">
    <text evidence="1">Belongs to the UbiA prenyltransferase family. Protoheme IX farnesyltransferase subfamily.</text>
</comment>
<sequence>MQQVISHSLPRRHNNILQVFKSYYQLTKPRIILLLLITTAAGMWLGAKGEVSLFLLFVTLTGGALASGAANAINCIYDSDIDYIMERTRWRPIPSGRVKPRDALIFALTLAATSFTLLTVFANLLAALLAMSGIVFYVGVYTHWLKRHSVQNIVIGGAAGAIPPLVGWAAVTGELSWAAWLLFAIIVVWTPPHFWALAIYIRDEYQEVGVPMLPVIEGNEETARQIWVYTLILIPMTLLLVYPLHVSGAIYAVLATYLGVIFIKKAWQLLKDPSNKDVARSLFKYSIYYMMLLCLVMVIDSLPFTHGITTALADSWQTFIGGAIAILF</sequence>
<proteinExistence type="inferred from homology"/>